<dbReference type="EMBL" id="AE016958">
    <property type="protein sequence ID" value="AAS03415.1"/>
    <property type="molecule type" value="Genomic_DNA"/>
</dbReference>
<dbReference type="RefSeq" id="WP_003872626.1">
    <property type="nucleotide sequence ID" value="NZ_CP106873.1"/>
</dbReference>
<dbReference type="SMR" id="Q741J2"/>
<dbReference type="STRING" id="262316.MAP_1098"/>
<dbReference type="GeneID" id="75270807"/>
<dbReference type="KEGG" id="mpa:MAP_1098"/>
<dbReference type="eggNOG" id="COG0781">
    <property type="taxonomic scope" value="Bacteria"/>
</dbReference>
<dbReference type="HOGENOM" id="CLU_087843_2_3_11"/>
<dbReference type="Proteomes" id="UP000000580">
    <property type="component" value="Chromosome"/>
</dbReference>
<dbReference type="GO" id="GO:0005829">
    <property type="term" value="C:cytosol"/>
    <property type="evidence" value="ECO:0007669"/>
    <property type="project" value="TreeGrafter"/>
</dbReference>
<dbReference type="GO" id="GO:0003723">
    <property type="term" value="F:RNA binding"/>
    <property type="evidence" value="ECO:0007669"/>
    <property type="project" value="UniProtKB-UniRule"/>
</dbReference>
<dbReference type="GO" id="GO:0006353">
    <property type="term" value="P:DNA-templated transcription termination"/>
    <property type="evidence" value="ECO:0007669"/>
    <property type="project" value="UniProtKB-UniRule"/>
</dbReference>
<dbReference type="GO" id="GO:0031564">
    <property type="term" value="P:transcription antitermination"/>
    <property type="evidence" value="ECO:0007669"/>
    <property type="project" value="UniProtKB-KW"/>
</dbReference>
<dbReference type="CDD" id="cd00619">
    <property type="entry name" value="Terminator_NusB"/>
    <property type="match status" value="1"/>
</dbReference>
<dbReference type="Gene3D" id="1.10.940.10">
    <property type="entry name" value="NusB-like"/>
    <property type="match status" value="1"/>
</dbReference>
<dbReference type="HAMAP" id="MF_00073">
    <property type="entry name" value="NusB"/>
    <property type="match status" value="1"/>
</dbReference>
<dbReference type="InterPro" id="IPR035926">
    <property type="entry name" value="NusB-like_sf"/>
</dbReference>
<dbReference type="InterPro" id="IPR011605">
    <property type="entry name" value="NusB_fam"/>
</dbReference>
<dbReference type="InterPro" id="IPR006027">
    <property type="entry name" value="NusB_RsmB_TIM44"/>
</dbReference>
<dbReference type="NCBIfam" id="TIGR01951">
    <property type="entry name" value="nusB"/>
    <property type="match status" value="1"/>
</dbReference>
<dbReference type="PANTHER" id="PTHR11078:SF3">
    <property type="entry name" value="ANTITERMINATION NUSB DOMAIN-CONTAINING PROTEIN"/>
    <property type="match status" value="1"/>
</dbReference>
<dbReference type="PANTHER" id="PTHR11078">
    <property type="entry name" value="N UTILIZATION SUBSTANCE PROTEIN B-RELATED"/>
    <property type="match status" value="1"/>
</dbReference>
<dbReference type="Pfam" id="PF01029">
    <property type="entry name" value="NusB"/>
    <property type="match status" value="1"/>
</dbReference>
<dbReference type="SUPFAM" id="SSF48013">
    <property type="entry name" value="NusB-like"/>
    <property type="match status" value="1"/>
</dbReference>
<gene>
    <name evidence="1" type="primary">nusB</name>
    <name type="ordered locus">MAP_1098</name>
</gene>
<accession>Q741J2</accession>
<reference key="1">
    <citation type="journal article" date="2005" name="Proc. Natl. Acad. Sci. U.S.A.">
        <title>The complete genome sequence of Mycobacterium avium subspecies paratuberculosis.</title>
        <authorList>
            <person name="Li L."/>
            <person name="Bannantine J.P."/>
            <person name="Zhang Q."/>
            <person name="Amonsin A."/>
            <person name="May B.J."/>
            <person name="Alt D."/>
            <person name="Banerji N."/>
            <person name="Kanjilal S."/>
            <person name="Kapur V."/>
        </authorList>
    </citation>
    <scope>NUCLEOTIDE SEQUENCE [LARGE SCALE GENOMIC DNA]</scope>
    <source>
        <strain>ATCC BAA-968 / K-10</strain>
    </source>
</reference>
<keyword id="KW-1185">Reference proteome</keyword>
<keyword id="KW-0694">RNA-binding</keyword>
<keyword id="KW-0804">Transcription</keyword>
<keyword id="KW-0889">Transcription antitermination</keyword>
<keyword id="KW-0805">Transcription regulation</keyword>
<comment type="function">
    <text evidence="1">Involved in transcription antitermination. Required for transcription of ribosomal RNA (rRNA) genes. Binds specifically to the boxA antiterminator sequence of the ribosomal RNA (rrn) operons.</text>
</comment>
<comment type="similarity">
    <text evidence="1">Belongs to the NusB family.</text>
</comment>
<organism>
    <name type="scientific">Mycolicibacterium paratuberculosis (strain ATCC BAA-968 / K-10)</name>
    <name type="common">Mycobacterium paratuberculosis</name>
    <dbReference type="NCBI Taxonomy" id="262316"/>
    <lineage>
        <taxon>Bacteria</taxon>
        <taxon>Bacillati</taxon>
        <taxon>Actinomycetota</taxon>
        <taxon>Actinomycetes</taxon>
        <taxon>Mycobacteriales</taxon>
        <taxon>Mycobacteriaceae</taxon>
        <taxon>Mycobacterium</taxon>
        <taxon>Mycobacterium avium complex (MAC)</taxon>
    </lineage>
</organism>
<protein>
    <recommendedName>
        <fullName evidence="1">Transcription antitermination protein NusB</fullName>
    </recommendedName>
    <alternativeName>
        <fullName evidence="1">Antitermination factor NusB</fullName>
    </alternativeName>
</protein>
<evidence type="ECO:0000255" key="1">
    <source>
        <dbReference type="HAMAP-Rule" id="MF_00073"/>
    </source>
</evidence>
<feature type="chain" id="PRO_0000265546" description="Transcription antitermination protein NusB">
    <location>
        <begin position="1"/>
        <end position="156"/>
    </location>
</feature>
<sequence length="156" mass="16798">MSKPLRGRHQARKRAVDLLFEAEARGLSPAEVVDVRTGLADTNPEVAPLQPYTAAVARGVGDHAAHIDDLISSHLQGWTLDRLPAVDRAILRVAVWELLYADDVPEPVAVDEAVQLAKELSTDDSPGFVNGVLGQVMLVTPQIRAAARAVRGPRDT</sequence>
<name>NUSB_MYCPA</name>
<proteinExistence type="inferred from homology"/>